<evidence type="ECO:0000255" key="1">
    <source>
        <dbReference type="HAMAP-Rule" id="MF_00272"/>
    </source>
</evidence>
<evidence type="ECO:0000255" key="2">
    <source>
        <dbReference type="PROSITE-ProRule" id="PRU01066"/>
    </source>
</evidence>
<keyword id="KW-0450">Lipoyl</keyword>
<keyword id="KW-1185">Reference proteome</keyword>
<dbReference type="EMBL" id="AE008691">
    <property type="protein sequence ID" value="AAM23393.1"/>
    <property type="molecule type" value="Genomic_DNA"/>
</dbReference>
<dbReference type="RefSeq" id="WP_011024600.1">
    <property type="nucleotide sequence ID" value="NC_003869.1"/>
</dbReference>
<dbReference type="SMR" id="Q8RDF0"/>
<dbReference type="STRING" id="273068.TTE0089"/>
<dbReference type="KEGG" id="tte:TTE0089"/>
<dbReference type="eggNOG" id="COG0509">
    <property type="taxonomic scope" value="Bacteria"/>
</dbReference>
<dbReference type="HOGENOM" id="CLU_097408_2_2_9"/>
<dbReference type="OrthoDB" id="9796712at2"/>
<dbReference type="Proteomes" id="UP000000555">
    <property type="component" value="Chromosome"/>
</dbReference>
<dbReference type="GO" id="GO:0005737">
    <property type="term" value="C:cytoplasm"/>
    <property type="evidence" value="ECO:0007669"/>
    <property type="project" value="TreeGrafter"/>
</dbReference>
<dbReference type="GO" id="GO:0005960">
    <property type="term" value="C:glycine cleavage complex"/>
    <property type="evidence" value="ECO:0007669"/>
    <property type="project" value="InterPro"/>
</dbReference>
<dbReference type="GO" id="GO:0019464">
    <property type="term" value="P:glycine decarboxylation via glycine cleavage system"/>
    <property type="evidence" value="ECO:0007669"/>
    <property type="project" value="UniProtKB-UniRule"/>
</dbReference>
<dbReference type="CDD" id="cd06848">
    <property type="entry name" value="GCS_H"/>
    <property type="match status" value="1"/>
</dbReference>
<dbReference type="Gene3D" id="2.40.50.100">
    <property type="match status" value="1"/>
</dbReference>
<dbReference type="HAMAP" id="MF_00272">
    <property type="entry name" value="GcvH"/>
    <property type="match status" value="1"/>
</dbReference>
<dbReference type="InterPro" id="IPR003016">
    <property type="entry name" value="2-oxoA_DH_lipoyl-BS"/>
</dbReference>
<dbReference type="InterPro" id="IPR000089">
    <property type="entry name" value="Biotin_lipoyl"/>
</dbReference>
<dbReference type="InterPro" id="IPR002930">
    <property type="entry name" value="GCV_H"/>
</dbReference>
<dbReference type="InterPro" id="IPR033753">
    <property type="entry name" value="GCV_H/Fam206"/>
</dbReference>
<dbReference type="InterPro" id="IPR017453">
    <property type="entry name" value="GCV_H_sub"/>
</dbReference>
<dbReference type="InterPro" id="IPR011053">
    <property type="entry name" value="Single_hybrid_motif"/>
</dbReference>
<dbReference type="NCBIfam" id="TIGR00527">
    <property type="entry name" value="gcvH"/>
    <property type="match status" value="1"/>
</dbReference>
<dbReference type="NCBIfam" id="NF002270">
    <property type="entry name" value="PRK01202.1"/>
    <property type="match status" value="1"/>
</dbReference>
<dbReference type="PANTHER" id="PTHR11715">
    <property type="entry name" value="GLYCINE CLEAVAGE SYSTEM H PROTEIN"/>
    <property type="match status" value="1"/>
</dbReference>
<dbReference type="PANTHER" id="PTHR11715:SF3">
    <property type="entry name" value="GLYCINE CLEAVAGE SYSTEM H PROTEIN-RELATED"/>
    <property type="match status" value="1"/>
</dbReference>
<dbReference type="Pfam" id="PF01597">
    <property type="entry name" value="GCV_H"/>
    <property type="match status" value="1"/>
</dbReference>
<dbReference type="SUPFAM" id="SSF51230">
    <property type="entry name" value="Single hybrid motif"/>
    <property type="match status" value="1"/>
</dbReference>
<dbReference type="PROSITE" id="PS50968">
    <property type="entry name" value="BIOTINYL_LIPOYL"/>
    <property type="match status" value="1"/>
</dbReference>
<dbReference type="PROSITE" id="PS00189">
    <property type="entry name" value="LIPOYL"/>
    <property type="match status" value="1"/>
</dbReference>
<sequence>MKVLEDLYYSKDHVWVKVEGDKAYIGITDYAQDSLGDAEYIELPEVGTEFTAGDVLGVIESAKAASDVYIPVDGEVIEVNNAVAEDPSLVNSDPYGSWLVAVRLKDKAQVEKLMKAEEYKKFLET</sequence>
<reference key="1">
    <citation type="journal article" date="2002" name="Genome Res.">
        <title>A complete sequence of the T. tengcongensis genome.</title>
        <authorList>
            <person name="Bao Q."/>
            <person name="Tian Y."/>
            <person name="Li W."/>
            <person name="Xu Z."/>
            <person name="Xuan Z."/>
            <person name="Hu S."/>
            <person name="Dong W."/>
            <person name="Yang J."/>
            <person name="Chen Y."/>
            <person name="Xue Y."/>
            <person name="Xu Y."/>
            <person name="Lai X."/>
            <person name="Huang L."/>
            <person name="Dong X."/>
            <person name="Ma Y."/>
            <person name="Ling L."/>
            <person name="Tan H."/>
            <person name="Chen R."/>
            <person name="Wang J."/>
            <person name="Yu J."/>
            <person name="Yang H."/>
        </authorList>
    </citation>
    <scope>NUCLEOTIDE SEQUENCE [LARGE SCALE GENOMIC DNA]</scope>
    <source>
        <strain>DSM 15242 / JCM 11007 / NBRC 100824 / MB4</strain>
    </source>
</reference>
<comment type="function">
    <text evidence="1">The glycine cleavage system catalyzes the degradation of glycine. The H protein shuttles the methylamine group of glycine from the P protein to the T protein.</text>
</comment>
<comment type="cofactor">
    <cofactor evidence="1">
        <name>(R)-lipoate</name>
        <dbReference type="ChEBI" id="CHEBI:83088"/>
    </cofactor>
    <text evidence="1">Binds 1 lipoyl cofactor covalently.</text>
</comment>
<comment type="subunit">
    <text evidence="1">The glycine cleavage system is composed of four proteins: P, T, L and H.</text>
</comment>
<comment type="similarity">
    <text evidence="1">Belongs to the GcvH family.</text>
</comment>
<gene>
    <name evidence="1" type="primary">gcvH1</name>
    <name type="ordered locus">TTE0089</name>
</gene>
<name>GCSH1_CALS4</name>
<organism>
    <name type="scientific">Caldanaerobacter subterraneus subsp. tengcongensis (strain DSM 15242 / JCM 11007 / NBRC 100824 / MB4)</name>
    <name type="common">Thermoanaerobacter tengcongensis</name>
    <dbReference type="NCBI Taxonomy" id="273068"/>
    <lineage>
        <taxon>Bacteria</taxon>
        <taxon>Bacillati</taxon>
        <taxon>Bacillota</taxon>
        <taxon>Clostridia</taxon>
        <taxon>Thermoanaerobacterales</taxon>
        <taxon>Thermoanaerobacteraceae</taxon>
        <taxon>Caldanaerobacter</taxon>
    </lineage>
</organism>
<accession>Q8RDF0</accession>
<proteinExistence type="inferred from homology"/>
<protein>
    <recommendedName>
        <fullName evidence="1">Glycine cleavage system H protein 1</fullName>
    </recommendedName>
</protein>
<feature type="chain" id="PRO_0000166259" description="Glycine cleavage system H protein 1">
    <location>
        <begin position="1"/>
        <end position="125"/>
    </location>
</feature>
<feature type="domain" description="Lipoyl-binding" evidence="2">
    <location>
        <begin position="22"/>
        <end position="103"/>
    </location>
</feature>
<feature type="modified residue" description="N6-lipoyllysine" evidence="1">
    <location>
        <position position="63"/>
    </location>
</feature>